<accession>A4T9W4</accession>
<comment type="catalytic activity">
    <reaction evidence="1">
        <text>L-citrulline + L-aspartate + ATP = 2-(N(omega)-L-arginino)succinate + AMP + diphosphate + H(+)</text>
        <dbReference type="Rhea" id="RHEA:10932"/>
        <dbReference type="ChEBI" id="CHEBI:15378"/>
        <dbReference type="ChEBI" id="CHEBI:29991"/>
        <dbReference type="ChEBI" id="CHEBI:30616"/>
        <dbReference type="ChEBI" id="CHEBI:33019"/>
        <dbReference type="ChEBI" id="CHEBI:57472"/>
        <dbReference type="ChEBI" id="CHEBI:57743"/>
        <dbReference type="ChEBI" id="CHEBI:456215"/>
        <dbReference type="EC" id="6.3.4.5"/>
    </reaction>
</comment>
<comment type="pathway">
    <text evidence="1">Amino-acid biosynthesis; L-arginine biosynthesis; L-arginine from L-ornithine and carbamoyl phosphate: step 2/3.</text>
</comment>
<comment type="subunit">
    <text evidence="1">Homotetramer.</text>
</comment>
<comment type="subcellular location">
    <subcellularLocation>
        <location evidence="1">Cytoplasm</location>
    </subcellularLocation>
</comment>
<comment type="similarity">
    <text evidence="1">Belongs to the argininosuccinate synthase family. Type 1 subfamily.</text>
</comment>
<protein>
    <recommendedName>
        <fullName evidence="1">Argininosuccinate synthase</fullName>
        <ecNumber evidence="1">6.3.4.5</ecNumber>
    </recommendedName>
    <alternativeName>
        <fullName evidence="1">Citrulline--aspartate ligase</fullName>
    </alternativeName>
</protein>
<evidence type="ECO:0000255" key="1">
    <source>
        <dbReference type="HAMAP-Rule" id="MF_00005"/>
    </source>
</evidence>
<reference key="1">
    <citation type="submission" date="2007-04" db="EMBL/GenBank/DDBJ databases">
        <title>Complete sequence of chromosome of Mycobacterium gilvum PYR-GCK.</title>
        <authorList>
            <consortium name="US DOE Joint Genome Institute"/>
            <person name="Copeland A."/>
            <person name="Lucas S."/>
            <person name="Lapidus A."/>
            <person name="Barry K."/>
            <person name="Detter J.C."/>
            <person name="Glavina del Rio T."/>
            <person name="Hammon N."/>
            <person name="Israni S."/>
            <person name="Dalin E."/>
            <person name="Tice H."/>
            <person name="Pitluck S."/>
            <person name="Chain P."/>
            <person name="Malfatti S."/>
            <person name="Shin M."/>
            <person name="Vergez L."/>
            <person name="Schmutz J."/>
            <person name="Larimer F."/>
            <person name="Land M."/>
            <person name="Hauser L."/>
            <person name="Kyrpides N."/>
            <person name="Mikhailova N."/>
            <person name="Miller C."/>
            <person name="Richardson P."/>
        </authorList>
    </citation>
    <scope>NUCLEOTIDE SEQUENCE [LARGE SCALE GENOMIC DNA]</scope>
    <source>
        <strain>PYR-GCK</strain>
    </source>
</reference>
<feature type="chain" id="PRO_1000073822" description="Argininosuccinate synthase">
    <location>
        <begin position="1"/>
        <end position="400"/>
    </location>
</feature>
<feature type="binding site" evidence="1">
    <location>
        <begin position="8"/>
        <end position="16"/>
    </location>
    <ligand>
        <name>ATP</name>
        <dbReference type="ChEBI" id="CHEBI:30616"/>
    </ligand>
</feature>
<feature type="binding site" evidence="1">
    <location>
        <position position="87"/>
    </location>
    <ligand>
        <name>L-citrulline</name>
        <dbReference type="ChEBI" id="CHEBI:57743"/>
    </ligand>
</feature>
<feature type="binding site" evidence="1">
    <location>
        <position position="117"/>
    </location>
    <ligand>
        <name>ATP</name>
        <dbReference type="ChEBI" id="CHEBI:30616"/>
    </ligand>
</feature>
<feature type="binding site" evidence="1">
    <location>
        <position position="119"/>
    </location>
    <ligand>
        <name>L-aspartate</name>
        <dbReference type="ChEBI" id="CHEBI:29991"/>
    </ligand>
</feature>
<feature type="binding site" evidence="1">
    <location>
        <position position="123"/>
    </location>
    <ligand>
        <name>L-aspartate</name>
        <dbReference type="ChEBI" id="CHEBI:29991"/>
    </ligand>
</feature>
<feature type="binding site" evidence="1">
    <location>
        <position position="123"/>
    </location>
    <ligand>
        <name>L-citrulline</name>
        <dbReference type="ChEBI" id="CHEBI:57743"/>
    </ligand>
</feature>
<feature type="binding site" evidence="1">
    <location>
        <position position="124"/>
    </location>
    <ligand>
        <name>L-aspartate</name>
        <dbReference type="ChEBI" id="CHEBI:29991"/>
    </ligand>
</feature>
<feature type="binding site" evidence="1">
    <location>
        <position position="127"/>
    </location>
    <ligand>
        <name>L-citrulline</name>
        <dbReference type="ChEBI" id="CHEBI:57743"/>
    </ligand>
</feature>
<feature type="binding site" evidence="1">
    <location>
        <position position="175"/>
    </location>
    <ligand>
        <name>L-citrulline</name>
        <dbReference type="ChEBI" id="CHEBI:57743"/>
    </ligand>
</feature>
<feature type="binding site" evidence="1">
    <location>
        <position position="260"/>
    </location>
    <ligand>
        <name>L-citrulline</name>
        <dbReference type="ChEBI" id="CHEBI:57743"/>
    </ligand>
</feature>
<feature type="binding site" evidence="1">
    <location>
        <position position="272"/>
    </location>
    <ligand>
        <name>L-citrulline</name>
        <dbReference type="ChEBI" id="CHEBI:57743"/>
    </ligand>
</feature>
<name>ASSY_MYCGI</name>
<organism>
    <name type="scientific">Mycolicibacterium gilvum (strain PYR-GCK)</name>
    <name type="common">Mycobacterium gilvum (strain PYR-GCK)</name>
    <dbReference type="NCBI Taxonomy" id="350054"/>
    <lineage>
        <taxon>Bacteria</taxon>
        <taxon>Bacillati</taxon>
        <taxon>Actinomycetota</taxon>
        <taxon>Actinomycetes</taxon>
        <taxon>Mycobacteriales</taxon>
        <taxon>Mycobacteriaceae</taxon>
        <taxon>Mycolicibacterium</taxon>
    </lineage>
</organism>
<dbReference type="EC" id="6.3.4.5" evidence="1"/>
<dbReference type="EMBL" id="CP000656">
    <property type="protein sequence ID" value="ABP45998.1"/>
    <property type="molecule type" value="Genomic_DNA"/>
</dbReference>
<dbReference type="SMR" id="A4T9W4"/>
<dbReference type="STRING" id="350054.Mflv_3524"/>
<dbReference type="KEGG" id="mgi:Mflv_3524"/>
<dbReference type="eggNOG" id="COG0137">
    <property type="taxonomic scope" value="Bacteria"/>
</dbReference>
<dbReference type="HOGENOM" id="CLU_032784_4_2_11"/>
<dbReference type="OrthoDB" id="9801641at2"/>
<dbReference type="UniPathway" id="UPA00068">
    <property type="reaction ID" value="UER00113"/>
</dbReference>
<dbReference type="GO" id="GO:0005737">
    <property type="term" value="C:cytoplasm"/>
    <property type="evidence" value="ECO:0007669"/>
    <property type="project" value="UniProtKB-SubCell"/>
</dbReference>
<dbReference type="GO" id="GO:0004055">
    <property type="term" value="F:argininosuccinate synthase activity"/>
    <property type="evidence" value="ECO:0007669"/>
    <property type="project" value="UniProtKB-UniRule"/>
</dbReference>
<dbReference type="GO" id="GO:0005524">
    <property type="term" value="F:ATP binding"/>
    <property type="evidence" value="ECO:0007669"/>
    <property type="project" value="UniProtKB-UniRule"/>
</dbReference>
<dbReference type="GO" id="GO:0000053">
    <property type="term" value="P:argininosuccinate metabolic process"/>
    <property type="evidence" value="ECO:0007669"/>
    <property type="project" value="TreeGrafter"/>
</dbReference>
<dbReference type="GO" id="GO:0006526">
    <property type="term" value="P:L-arginine biosynthetic process"/>
    <property type="evidence" value="ECO:0007669"/>
    <property type="project" value="UniProtKB-UniRule"/>
</dbReference>
<dbReference type="GO" id="GO:0000050">
    <property type="term" value="P:urea cycle"/>
    <property type="evidence" value="ECO:0007669"/>
    <property type="project" value="TreeGrafter"/>
</dbReference>
<dbReference type="CDD" id="cd01999">
    <property type="entry name" value="ASS"/>
    <property type="match status" value="1"/>
</dbReference>
<dbReference type="FunFam" id="3.40.50.620:FF:000038">
    <property type="entry name" value="Argininosuccinate synthase"/>
    <property type="match status" value="1"/>
</dbReference>
<dbReference type="FunFam" id="3.90.1260.10:FF:000007">
    <property type="entry name" value="Argininosuccinate synthase"/>
    <property type="match status" value="1"/>
</dbReference>
<dbReference type="Gene3D" id="3.90.1260.10">
    <property type="entry name" value="Argininosuccinate synthetase, chain A, domain 2"/>
    <property type="match status" value="1"/>
</dbReference>
<dbReference type="Gene3D" id="3.40.50.620">
    <property type="entry name" value="HUPs"/>
    <property type="match status" value="1"/>
</dbReference>
<dbReference type="Gene3D" id="1.20.5.470">
    <property type="entry name" value="Single helix bin"/>
    <property type="match status" value="1"/>
</dbReference>
<dbReference type="HAMAP" id="MF_00005">
    <property type="entry name" value="Arg_succ_synth_type1"/>
    <property type="match status" value="1"/>
</dbReference>
<dbReference type="InterPro" id="IPR048268">
    <property type="entry name" value="Arginosuc_syn_C"/>
</dbReference>
<dbReference type="InterPro" id="IPR048267">
    <property type="entry name" value="Arginosuc_syn_N"/>
</dbReference>
<dbReference type="InterPro" id="IPR001518">
    <property type="entry name" value="Arginosuc_synth"/>
</dbReference>
<dbReference type="InterPro" id="IPR018223">
    <property type="entry name" value="Arginosuc_synth_CS"/>
</dbReference>
<dbReference type="InterPro" id="IPR023434">
    <property type="entry name" value="Arginosuc_synth_type_1_subfam"/>
</dbReference>
<dbReference type="InterPro" id="IPR024074">
    <property type="entry name" value="AS_cat/multimer_dom_body"/>
</dbReference>
<dbReference type="InterPro" id="IPR014729">
    <property type="entry name" value="Rossmann-like_a/b/a_fold"/>
</dbReference>
<dbReference type="NCBIfam" id="TIGR00032">
    <property type="entry name" value="argG"/>
    <property type="match status" value="1"/>
</dbReference>
<dbReference type="NCBIfam" id="NF001770">
    <property type="entry name" value="PRK00509.1"/>
    <property type="match status" value="1"/>
</dbReference>
<dbReference type="PANTHER" id="PTHR11587">
    <property type="entry name" value="ARGININOSUCCINATE SYNTHASE"/>
    <property type="match status" value="1"/>
</dbReference>
<dbReference type="PANTHER" id="PTHR11587:SF2">
    <property type="entry name" value="ARGININOSUCCINATE SYNTHASE"/>
    <property type="match status" value="1"/>
</dbReference>
<dbReference type="Pfam" id="PF20979">
    <property type="entry name" value="Arginosuc_syn_C"/>
    <property type="match status" value="1"/>
</dbReference>
<dbReference type="Pfam" id="PF00764">
    <property type="entry name" value="Arginosuc_synth"/>
    <property type="match status" value="1"/>
</dbReference>
<dbReference type="SUPFAM" id="SSF52402">
    <property type="entry name" value="Adenine nucleotide alpha hydrolases-like"/>
    <property type="match status" value="1"/>
</dbReference>
<dbReference type="SUPFAM" id="SSF69864">
    <property type="entry name" value="Argininosuccinate synthetase, C-terminal domain"/>
    <property type="match status" value="1"/>
</dbReference>
<dbReference type="PROSITE" id="PS00564">
    <property type="entry name" value="ARGININOSUCCIN_SYN_1"/>
    <property type="match status" value="1"/>
</dbReference>
<dbReference type="PROSITE" id="PS00565">
    <property type="entry name" value="ARGININOSUCCIN_SYN_2"/>
    <property type="match status" value="1"/>
</dbReference>
<keyword id="KW-0028">Amino-acid biosynthesis</keyword>
<keyword id="KW-0055">Arginine biosynthesis</keyword>
<keyword id="KW-0067">ATP-binding</keyword>
<keyword id="KW-0963">Cytoplasm</keyword>
<keyword id="KW-0436">Ligase</keyword>
<keyword id="KW-0547">Nucleotide-binding</keyword>
<sequence length="400" mass="43763">MSERVILAYSGGLDTSVAISWIGKETGKEVVAVAIDLGQGGEDMEVVRQRAIDCGAVEAVVVDARDEFAEQYCLPAIQSNALYMDRYPLVSALSRPLIVKHLVDAAREHGGGIVAHGCTGKGNDQVRFEVGFASLAPDLKVLAPVRDYAWTREKAIAFAEENAIPINVTKRSPFSIDQNVWGRAVETGFLEHLWNAPTKDVYDYTEDPTVNWSSPDEVVVGFEKGVPVSIDGNPVTVLQAIEQLNERAGAQGVGRLDVVEDRLVGIKSREIYEAPGAMVLITAHTELEHVTLERELGRYKRLTDQKWGELVYDGLWFSPLKSALESFVANTQEHVSGEIRLVLHGGHIAVNGRRSSESLYDFNLATYDEGDTFDQSSAKGFVHVHGLSSSLSARRDLAGK</sequence>
<proteinExistence type="inferred from homology"/>
<gene>
    <name evidence="1" type="primary">argG</name>
    <name type="ordered locus">Mflv_3524</name>
</gene>